<reference key="1">
    <citation type="journal article" date="2002" name="Proc. Natl. Acad. Sci. U.S.A.">
        <title>Complete genome sequence and comparative genomic analysis of an emerging human pathogen, serotype V Streptococcus agalactiae.</title>
        <authorList>
            <person name="Tettelin H."/>
            <person name="Masignani V."/>
            <person name="Cieslewicz M.J."/>
            <person name="Eisen J.A."/>
            <person name="Peterson S.N."/>
            <person name="Wessels M.R."/>
            <person name="Paulsen I.T."/>
            <person name="Nelson K.E."/>
            <person name="Margarit I."/>
            <person name="Read T.D."/>
            <person name="Madoff L.C."/>
            <person name="Wolf A.M."/>
            <person name="Beanan M.J."/>
            <person name="Brinkac L.M."/>
            <person name="Daugherty S.C."/>
            <person name="DeBoy R.T."/>
            <person name="Durkin A.S."/>
            <person name="Kolonay J.F."/>
            <person name="Madupu R."/>
            <person name="Lewis M.R."/>
            <person name="Radune D."/>
            <person name="Fedorova N.B."/>
            <person name="Scanlan D."/>
            <person name="Khouri H.M."/>
            <person name="Mulligan S."/>
            <person name="Carty H.A."/>
            <person name="Cline R.T."/>
            <person name="Van Aken S.E."/>
            <person name="Gill J."/>
            <person name="Scarselli M."/>
            <person name="Mora M."/>
            <person name="Iacobini E.T."/>
            <person name="Brettoni C."/>
            <person name="Galli G."/>
            <person name="Mariani M."/>
            <person name="Vegni F."/>
            <person name="Maione D."/>
            <person name="Rinaudo D."/>
            <person name="Rappuoli R."/>
            <person name="Telford J.L."/>
            <person name="Kasper D.L."/>
            <person name="Grandi G."/>
            <person name="Fraser C.M."/>
        </authorList>
    </citation>
    <scope>NUCLEOTIDE SEQUENCE [LARGE SCALE GENOMIC DNA]</scope>
    <source>
        <strain>ATCC BAA-611 / 2603 V/R</strain>
    </source>
</reference>
<feature type="chain" id="PRO_0000111416" description="Small ribosomal subunit protein uS9">
    <location>
        <begin position="1"/>
        <end position="130"/>
    </location>
</feature>
<dbReference type="EMBL" id="AE009948">
    <property type="protein sequence ID" value="AAM99122.1"/>
    <property type="molecule type" value="Genomic_DNA"/>
</dbReference>
<dbReference type="RefSeq" id="NP_687250.1">
    <property type="nucleotide sequence ID" value="NC_004116.1"/>
</dbReference>
<dbReference type="RefSeq" id="WP_000035940.1">
    <property type="nucleotide sequence ID" value="NC_004116.1"/>
</dbReference>
<dbReference type="SMR" id="Q8E1Y6"/>
<dbReference type="STRING" id="208435.SAG0215"/>
<dbReference type="GeneID" id="66885190"/>
<dbReference type="KEGG" id="sag:SAG0215"/>
<dbReference type="PATRIC" id="fig|208435.3.peg.214"/>
<dbReference type="HOGENOM" id="CLU_046483_2_1_9"/>
<dbReference type="OrthoDB" id="9803965at2"/>
<dbReference type="Proteomes" id="UP000000821">
    <property type="component" value="Chromosome"/>
</dbReference>
<dbReference type="GO" id="GO:0022627">
    <property type="term" value="C:cytosolic small ribosomal subunit"/>
    <property type="evidence" value="ECO:0007669"/>
    <property type="project" value="TreeGrafter"/>
</dbReference>
<dbReference type="GO" id="GO:0003723">
    <property type="term" value="F:RNA binding"/>
    <property type="evidence" value="ECO:0007669"/>
    <property type="project" value="TreeGrafter"/>
</dbReference>
<dbReference type="GO" id="GO:0003735">
    <property type="term" value="F:structural constituent of ribosome"/>
    <property type="evidence" value="ECO:0007669"/>
    <property type="project" value="InterPro"/>
</dbReference>
<dbReference type="GO" id="GO:0006412">
    <property type="term" value="P:translation"/>
    <property type="evidence" value="ECO:0007669"/>
    <property type="project" value="UniProtKB-UniRule"/>
</dbReference>
<dbReference type="FunFam" id="3.30.230.10:FF:000001">
    <property type="entry name" value="30S ribosomal protein S9"/>
    <property type="match status" value="1"/>
</dbReference>
<dbReference type="Gene3D" id="3.30.230.10">
    <property type="match status" value="1"/>
</dbReference>
<dbReference type="HAMAP" id="MF_00532_B">
    <property type="entry name" value="Ribosomal_uS9_B"/>
    <property type="match status" value="1"/>
</dbReference>
<dbReference type="InterPro" id="IPR020568">
    <property type="entry name" value="Ribosomal_Su5_D2-typ_SF"/>
</dbReference>
<dbReference type="InterPro" id="IPR000754">
    <property type="entry name" value="Ribosomal_uS9"/>
</dbReference>
<dbReference type="InterPro" id="IPR023035">
    <property type="entry name" value="Ribosomal_uS9_bac/plastid"/>
</dbReference>
<dbReference type="InterPro" id="IPR020574">
    <property type="entry name" value="Ribosomal_uS9_CS"/>
</dbReference>
<dbReference type="InterPro" id="IPR014721">
    <property type="entry name" value="Ribsml_uS5_D2-typ_fold_subgr"/>
</dbReference>
<dbReference type="NCBIfam" id="NF001099">
    <property type="entry name" value="PRK00132.1"/>
    <property type="match status" value="1"/>
</dbReference>
<dbReference type="PANTHER" id="PTHR21569">
    <property type="entry name" value="RIBOSOMAL PROTEIN S9"/>
    <property type="match status" value="1"/>
</dbReference>
<dbReference type="PANTHER" id="PTHR21569:SF1">
    <property type="entry name" value="SMALL RIBOSOMAL SUBUNIT PROTEIN US9M"/>
    <property type="match status" value="1"/>
</dbReference>
<dbReference type="Pfam" id="PF00380">
    <property type="entry name" value="Ribosomal_S9"/>
    <property type="match status" value="1"/>
</dbReference>
<dbReference type="SUPFAM" id="SSF54211">
    <property type="entry name" value="Ribosomal protein S5 domain 2-like"/>
    <property type="match status" value="1"/>
</dbReference>
<dbReference type="PROSITE" id="PS00360">
    <property type="entry name" value="RIBOSOMAL_S9"/>
    <property type="match status" value="1"/>
</dbReference>
<comment type="similarity">
    <text evidence="1">Belongs to the universal ribosomal protein uS9 family.</text>
</comment>
<sequence>MAQAQYAGTGRRKNAVARVRLVPGTGKITINKKDVEEYIPHADLRLVINQPFAVTSTQGSYDVFVNVVGGGYAGQSGAIRHGISRALLEVDPDFRDSLKRAGLLTRDARMVERKKPGLKKARKASQFSKR</sequence>
<keyword id="KW-1185">Reference proteome</keyword>
<keyword id="KW-0687">Ribonucleoprotein</keyword>
<keyword id="KW-0689">Ribosomal protein</keyword>
<evidence type="ECO:0000255" key="1">
    <source>
        <dbReference type="HAMAP-Rule" id="MF_00532"/>
    </source>
</evidence>
<evidence type="ECO:0000305" key="2"/>
<organism>
    <name type="scientific">Streptococcus agalactiae serotype V (strain ATCC BAA-611 / 2603 V/R)</name>
    <dbReference type="NCBI Taxonomy" id="208435"/>
    <lineage>
        <taxon>Bacteria</taxon>
        <taxon>Bacillati</taxon>
        <taxon>Bacillota</taxon>
        <taxon>Bacilli</taxon>
        <taxon>Lactobacillales</taxon>
        <taxon>Streptococcaceae</taxon>
        <taxon>Streptococcus</taxon>
    </lineage>
</organism>
<protein>
    <recommendedName>
        <fullName evidence="1">Small ribosomal subunit protein uS9</fullName>
    </recommendedName>
    <alternativeName>
        <fullName evidence="2">30S ribosomal protein S9</fullName>
    </alternativeName>
</protein>
<proteinExistence type="inferred from homology"/>
<gene>
    <name evidence="1" type="primary">rpsI</name>
    <name type="ordered locus">SAG0215</name>
</gene>
<name>RS9_STRA5</name>
<accession>Q8E1Y6</accession>